<dbReference type="EMBL" id="AK033353">
    <property type="protein sequence ID" value="BAC28242.1"/>
    <property type="molecule type" value="mRNA"/>
</dbReference>
<dbReference type="EMBL" id="BC132483">
    <property type="protein sequence ID" value="AAI32484.1"/>
    <property type="molecule type" value="mRNA"/>
</dbReference>
<dbReference type="EMBL" id="BC145690">
    <property type="protein sequence ID" value="AAI45691.1"/>
    <property type="molecule type" value="mRNA"/>
</dbReference>
<dbReference type="CCDS" id="CCDS27492.1"/>
<dbReference type="RefSeq" id="NP_808423.1">
    <property type="nucleotide sequence ID" value="NM_177755.3"/>
</dbReference>
<dbReference type="SMR" id="Q8BSF5"/>
<dbReference type="BioGRID" id="234560">
    <property type="interactions" value="7"/>
</dbReference>
<dbReference type="FunCoup" id="Q8BSF5">
    <property type="interactions" value="37"/>
</dbReference>
<dbReference type="STRING" id="10090.ENSMUSP00000022985"/>
<dbReference type="iPTMnet" id="Q8BSF5"/>
<dbReference type="PhosphoSitePlus" id="Q8BSF5"/>
<dbReference type="jPOST" id="Q8BSF5"/>
<dbReference type="PaxDb" id="10090-ENSMUSP00000022985"/>
<dbReference type="Antibodypedia" id="27017">
    <property type="antibodies" value="90 antibodies from 14 providers"/>
</dbReference>
<dbReference type="DNASU" id="268807"/>
<dbReference type="Ensembl" id="ENSMUST00000022985.2">
    <property type="protein sequence ID" value="ENSMUSP00000022985.2"/>
    <property type="gene ID" value="ENSMUSG00000022357.3"/>
</dbReference>
<dbReference type="GeneID" id="268807"/>
<dbReference type="KEGG" id="mmu:268807"/>
<dbReference type="UCSC" id="uc007vtl.1">
    <property type="organism name" value="mouse"/>
</dbReference>
<dbReference type="AGR" id="MGI:3045310"/>
<dbReference type="CTD" id="340359"/>
<dbReference type="MGI" id="MGI:3045310">
    <property type="gene designation" value="Klhl38"/>
</dbReference>
<dbReference type="VEuPathDB" id="HostDB:ENSMUSG00000022357"/>
<dbReference type="eggNOG" id="KOG4441">
    <property type="taxonomic scope" value="Eukaryota"/>
</dbReference>
<dbReference type="GeneTree" id="ENSGT00940000157647"/>
<dbReference type="HOGENOM" id="CLU_004253_14_6_1"/>
<dbReference type="InParanoid" id="Q8BSF5"/>
<dbReference type="OMA" id="EVALTCF"/>
<dbReference type="OrthoDB" id="45365at2759"/>
<dbReference type="PhylomeDB" id="Q8BSF5"/>
<dbReference type="TreeFam" id="TF329218"/>
<dbReference type="BioGRID-ORCS" id="268807">
    <property type="hits" value="2 hits in 78 CRISPR screens"/>
</dbReference>
<dbReference type="PRO" id="PR:Q8BSF5"/>
<dbReference type="Proteomes" id="UP000000589">
    <property type="component" value="Chromosome 15"/>
</dbReference>
<dbReference type="RNAct" id="Q8BSF5">
    <property type="molecule type" value="protein"/>
</dbReference>
<dbReference type="Bgee" id="ENSMUSG00000022357">
    <property type="expression patterns" value="Expressed in hindlimb stylopod muscle and 30 other cell types or tissues"/>
</dbReference>
<dbReference type="CDD" id="cd18476">
    <property type="entry name" value="BACK_KLHL38"/>
    <property type="match status" value="1"/>
</dbReference>
<dbReference type="FunFam" id="1.25.40.420:FF:000001">
    <property type="entry name" value="Kelch-like family member 12"/>
    <property type="match status" value="1"/>
</dbReference>
<dbReference type="Gene3D" id="1.25.40.420">
    <property type="match status" value="1"/>
</dbReference>
<dbReference type="Gene3D" id="2.120.10.80">
    <property type="entry name" value="Kelch-type beta propeller"/>
    <property type="match status" value="2"/>
</dbReference>
<dbReference type="Gene3D" id="3.30.710.10">
    <property type="entry name" value="Potassium Channel Kv1.1, Chain A"/>
    <property type="match status" value="1"/>
</dbReference>
<dbReference type="InterPro" id="IPR011705">
    <property type="entry name" value="BACK"/>
</dbReference>
<dbReference type="InterPro" id="IPR056737">
    <property type="entry name" value="Beta-prop_ATRN-MKLN-like"/>
</dbReference>
<dbReference type="InterPro" id="IPR017096">
    <property type="entry name" value="BTB-kelch_protein"/>
</dbReference>
<dbReference type="InterPro" id="IPR000210">
    <property type="entry name" value="BTB/POZ_dom"/>
</dbReference>
<dbReference type="InterPro" id="IPR015915">
    <property type="entry name" value="Kelch-typ_b-propeller"/>
</dbReference>
<dbReference type="InterPro" id="IPR006652">
    <property type="entry name" value="Kelch_1"/>
</dbReference>
<dbReference type="InterPro" id="IPR030568">
    <property type="entry name" value="KLHL38_BACK"/>
</dbReference>
<dbReference type="InterPro" id="IPR011333">
    <property type="entry name" value="SKP1/BTB/POZ_sf"/>
</dbReference>
<dbReference type="PANTHER" id="PTHR24412">
    <property type="entry name" value="KELCH PROTEIN"/>
    <property type="match status" value="1"/>
</dbReference>
<dbReference type="PANTHER" id="PTHR24412:SF462">
    <property type="entry name" value="KELCH-LIKE PROTEIN 38"/>
    <property type="match status" value="1"/>
</dbReference>
<dbReference type="Pfam" id="PF07707">
    <property type="entry name" value="BACK"/>
    <property type="match status" value="1"/>
</dbReference>
<dbReference type="Pfam" id="PF24981">
    <property type="entry name" value="Beta-prop_ATRN-LZTR1"/>
    <property type="match status" value="1"/>
</dbReference>
<dbReference type="Pfam" id="PF00651">
    <property type="entry name" value="BTB"/>
    <property type="match status" value="1"/>
</dbReference>
<dbReference type="PIRSF" id="PIRSF037037">
    <property type="entry name" value="Kelch-like_protein_gigaxonin"/>
    <property type="match status" value="1"/>
</dbReference>
<dbReference type="SMART" id="SM00875">
    <property type="entry name" value="BACK"/>
    <property type="match status" value="1"/>
</dbReference>
<dbReference type="SMART" id="SM00225">
    <property type="entry name" value="BTB"/>
    <property type="match status" value="1"/>
</dbReference>
<dbReference type="SMART" id="SM00612">
    <property type="entry name" value="Kelch"/>
    <property type="match status" value="5"/>
</dbReference>
<dbReference type="SUPFAM" id="SSF117281">
    <property type="entry name" value="Kelch motif"/>
    <property type="match status" value="1"/>
</dbReference>
<dbReference type="SUPFAM" id="SSF54695">
    <property type="entry name" value="POZ domain"/>
    <property type="match status" value="1"/>
</dbReference>
<dbReference type="PROSITE" id="PS50097">
    <property type="entry name" value="BTB"/>
    <property type="match status" value="1"/>
</dbReference>
<organism>
    <name type="scientific">Mus musculus</name>
    <name type="common">Mouse</name>
    <dbReference type="NCBI Taxonomy" id="10090"/>
    <lineage>
        <taxon>Eukaryota</taxon>
        <taxon>Metazoa</taxon>
        <taxon>Chordata</taxon>
        <taxon>Craniata</taxon>
        <taxon>Vertebrata</taxon>
        <taxon>Euteleostomi</taxon>
        <taxon>Mammalia</taxon>
        <taxon>Eutheria</taxon>
        <taxon>Euarchontoglires</taxon>
        <taxon>Glires</taxon>
        <taxon>Rodentia</taxon>
        <taxon>Myomorpha</taxon>
        <taxon>Muroidea</taxon>
        <taxon>Muridae</taxon>
        <taxon>Murinae</taxon>
        <taxon>Mus</taxon>
        <taxon>Mus</taxon>
    </lineage>
</organism>
<evidence type="ECO:0000255" key="1">
    <source>
        <dbReference type="PROSITE-ProRule" id="PRU00037"/>
    </source>
</evidence>
<name>KLH38_MOUSE</name>
<keyword id="KW-0880">Kelch repeat</keyword>
<keyword id="KW-1185">Reference proteome</keyword>
<keyword id="KW-0677">Repeat</keyword>
<sequence length="581" mass="65651">MDEELPDGVVFKDHSFSSDLLRQLNGLRQSKILTDVSICSGAWEVPCHRSVLASSSPYFKAMFCSHFRESREAKVQMKGISSTTLEQVITYVYTGEVHISAANVLPLMEAAAMLQYPRVFEACSSYLQSQLAPSNCLGLVRLAEILSCDSLKKKAKEVALTYFPEVAASADLKELCAMELRDYLGDDRLCGEEEKVFEALMAWVKHDLQARWRHMQELLQQVRLQYIHPAFFHHFIANDALLQSSPACQAILEMARKQIFSLYGPSAQDCKLLWRMPPRSSYQDFLLLLGGRKDNQQTTRDVLLYSGQTGQWQSLAKLPIRLYKASAVTLHRSVYVLGGMTVSEGKSLISCGVYIFSLKLNQWRVGEPMLAARYSHRSTTHRNFIFSIGGTGEGQELLASMERYDSIRDVWESMAGMPVAVLHPAVAVKDQRLYLFGGEDIMQNPVRLIQVYHISRNTWYKMETRMIKNVCAPAVVLGEQIVIVGGYTRRILAYDPQSNKFVKCADMKDRRMHHGATVMGNKLYVTGGRRLTTDCNIEDSASFDCYDPETDTWTSQGQLPHKLFDHACLTLQCIPHMTSLS</sequence>
<gene>
    <name type="primary">Klhl38</name>
</gene>
<reference key="1">
    <citation type="journal article" date="2005" name="Science">
        <title>The transcriptional landscape of the mammalian genome.</title>
        <authorList>
            <person name="Carninci P."/>
            <person name="Kasukawa T."/>
            <person name="Katayama S."/>
            <person name="Gough J."/>
            <person name="Frith M.C."/>
            <person name="Maeda N."/>
            <person name="Oyama R."/>
            <person name="Ravasi T."/>
            <person name="Lenhard B."/>
            <person name="Wells C."/>
            <person name="Kodzius R."/>
            <person name="Shimokawa K."/>
            <person name="Bajic V.B."/>
            <person name="Brenner S.E."/>
            <person name="Batalov S."/>
            <person name="Forrest A.R."/>
            <person name="Zavolan M."/>
            <person name="Davis M.J."/>
            <person name="Wilming L.G."/>
            <person name="Aidinis V."/>
            <person name="Allen J.E."/>
            <person name="Ambesi-Impiombato A."/>
            <person name="Apweiler R."/>
            <person name="Aturaliya R.N."/>
            <person name="Bailey T.L."/>
            <person name="Bansal M."/>
            <person name="Baxter L."/>
            <person name="Beisel K.W."/>
            <person name="Bersano T."/>
            <person name="Bono H."/>
            <person name="Chalk A.M."/>
            <person name="Chiu K.P."/>
            <person name="Choudhary V."/>
            <person name="Christoffels A."/>
            <person name="Clutterbuck D.R."/>
            <person name="Crowe M.L."/>
            <person name="Dalla E."/>
            <person name="Dalrymple B.P."/>
            <person name="de Bono B."/>
            <person name="Della Gatta G."/>
            <person name="di Bernardo D."/>
            <person name="Down T."/>
            <person name="Engstrom P."/>
            <person name="Fagiolini M."/>
            <person name="Faulkner G."/>
            <person name="Fletcher C.F."/>
            <person name="Fukushima T."/>
            <person name="Furuno M."/>
            <person name="Futaki S."/>
            <person name="Gariboldi M."/>
            <person name="Georgii-Hemming P."/>
            <person name="Gingeras T.R."/>
            <person name="Gojobori T."/>
            <person name="Green R.E."/>
            <person name="Gustincich S."/>
            <person name="Harbers M."/>
            <person name="Hayashi Y."/>
            <person name="Hensch T.K."/>
            <person name="Hirokawa N."/>
            <person name="Hill D."/>
            <person name="Huminiecki L."/>
            <person name="Iacono M."/>
            <person name="Ikeo K."/>
            <person name="Iwama A."/>
            <person name="Ishikawa T."/>
            <person name="Jakt M."/>
            <person name="Kanapin A."/>
            <person name="Katoh M."/>
            <person name="Kawasawa Y."/>
            <person name="Kelso J."/>
            <person name="Kitamura H."/>
            <person name="Kitano H."/>
            <person name="Kollias G."/>
            <person name="Krishnan S.P."/>
            <person name="Kruger A."/>
            <person name="Kummerfeld S.K."/>
            <person name="Kurochkin I.V."/>
            <person name="Lareau L.F."/>
            <person name="Lazarevic D."/>
            <person name="Lipovich L."/>
            <person name="Liu J."/>
            <person name="Liuni S."/>
            <person name="McWilliam S."/>
            <person name="Madan Babu M."/>
            <person name="Madera M."/>
            <person name="Marchionni L."/>
            <person name="Matsuda H."/>
            <person name="Matsuzawa S."/>
            <person name="Miki H."/>
            <person name="Mignone F."/>
            <person name="Miyake S."/>
            <person name="Morris K."/>
            <person name="Mottagui-Tabar S."/>
            <person name="Mulder N."/>
            <person name="Nakano N."/>
            <person name="Nakauchi H."/>
            <person name="Ng P."/>
            <person name="Nilsson R."/>
            <person name="Nishiguchi S."/>
            <person name="Nishikawa S."/>
            <person name="Nori F."/>
            <person name="Ohara O."/>
            <person name="Okazaki Y."/>
            <person name="Orlando V."/>
            <person name="Pang K.C."/>
            <person name="Pavan W.J."/>
            <person name="Pavesi G."/>
            <person name="Pesole G."/>
            <person name="Petrovsky N."/>
            <person name="Piazza S."/>
            <person name="Reed J."/>
            <person name="Reid J.F."/>
            <person name="Ring B.Z."/>
            <person name="Ringwald M."/>
            <person name="Rost B."/>
            <person name="Ruan Y."/>
            <person name="Salzberg S.L."/>
            <person name="Sandelin A."/>
            <person name="Schneider C."/>
            <person name="Schoenbach C."/>
            <person name="Sekiguchi K."/>
            <person name="Semple C.A."/>
            <person name="Seno S."/>
            <person name="Sessa L."/>
            <person name="Sheng Y."/>
            <person name="Shibata Y."/>
            <person name="Shimada H."/>
            <person name="Shimada K."/>
            <person name="Silva D."/>
            <person name="Sinclair B."/>
            <person name="Sperling S."/>
            <person name="Stupka E."/>
            <person name="Sugiura K."/>
            <person name="Sultana R."/>
            <person name="Takenaka Y."/>
            <person name="Taki K."/>
            <person name="Tammoja K."/>
            <person name="Tan S.L."/>
            <person name="Tang S."/>
            <person name="Taylor M.S."/>
            <person name="Tegner J."/>
            <person name="Teichmann S.A."/>
            <person name="Ueda H.R."/>
            <person name="van Nimwegen E."/>
            <person name="Verardo R."/>
            <person name="Wei C.L."/>
            <person name="Yagi K."/>
            <person name="Yamanishi H."/>
            <person name="Zabarovsky E."/>
            <person name="Zhu S."/>
            <person name="Zimmer A."/>
            <person name="Hide W."/>
            <person name="Bult C."/>
            <person name="Grimmond S.M."/>
            <person name="Teasdale R.D."/>
            <person name="Liu E.T."/>
            <person name="Brusic V."/>
            <person name="Quackenbush J."/>
            <person name="Wahlestedt C."/>
            <person name="Mattick J.S."/>
            <person name="Hume D.A."/>
            <person name="Kai C."/>
            <person name="Sasaki D."/>
            <person name="Tomaru Y."/>
            <person name="Fukuda S."/>
            <person name="Kanamori-Katayama M."/>
            <person name="Suzuki M."/>
            <person name="Aoki J."/>
            <person name="Arakawa T."/>
            <person name="Iida J."/>
            <person name="Imamura K."/>
            <person name="Itoh M."/>
            <person name="Kato T."/>
            <person name="Kawaji H."/>
            <person name="Kawagashira N."/>
            <person name="Kawashima T."/>
            <person name="Kojima M."/>
            <person name="Kondo S."/>
            <person name="Konno H."/>
            <person name="Nakano K."/>
            <person name="Ninomiya N."/>
            <person name="Nishio T."/>
            <person name="Okada M."/>
            <person name="Plessy C."/>
            <person name="Shibata K."/>
            <person name="Shiraki T."/>
            <person name="Suzuki S."/>
            <person name="Tagami M."/>
            <person name="Waki K."/>
            <person name="Watahiki A."/>
            <person name="Okamura-Oho Y."/>
            <person name="Suzuki H."/>
            <person name="Kawai J."/>
            <person name="Hayashizaki Y."/>
        </authorList>
    </citation>
    <scope>NUCLEOTIDE SEQUENCE [LARGE SCALE MRNA]</scope>
    <source>
        <strain>C57BL/6J</strain>
        <tissue>Embryo</tissue>
    </source>
</reference>
<reference key="2">
    <citation type="journal article" date="2004" name="Genome Res.">
        <title>The status, quality, and expansion of the NIH full-length cDNA project: the Mammalian Gene Collection (MGC).</title>
        <authorList>
            <consortium name="The MGC Project Team"/>
        </authorList>
    </citation>
    <scope>NUCLEOTIDE SEQUENCE [LARGE SCALE MRNA]</scope>
    <source>
        <tissue>Brain</tissue>
    </source>
</reference>
<feature type="chain" id="PRO_0000325810" description="Kelch-like protein 38">
    <location>
        <begin position="1"/>
        <end position="581"/>
    </location>
</feature>
<feature type="domain" description="BTB" evidence="1">
    <location>
        <begin position="34"/>
        <end position="101"/>
    </location>
</feature>
<feature type="domain" description="BACK">
    <location>
        <begin position="136"/>
        <end position="237"/>
    </location>
</feature>
<feature type="repeat" description="Kelch 1">
    <location>
        <begin position="285"/>
        <end position="332"/>
    </location>
</feature>
<feature type="repeat" description="Kelch 2">
    <location>
        <begin position="334"/>
        <end position="383"/>
    </location>
</feature>
<feature type="repeat" description="Kelch 3">
    <location>
        <begin position="384"/>
        <end position="431"/>
    </location>
</feature>
<feature type="repeat" description="Kelch 4">
    <location>
        <begin position="433"/>
        <end position="479"/>
    </location>
</feature>
<feature type="repeat" description="Kelch 5">
    <location>
        <begin position="480"/>
        <end position="521"/>
    </location>
</feature>
<feature type="repeat" description="Kelch 6">
    <location>
        <begin position="523"/>
        <end position="573"/>
    </location>
</feature>
<accession>Q8BSF5</accession>
<protein>
    <recommendedName>
        <fullName>Kelch-like protein 38</fullName>
    </recommendedName>
</protein>
<proteinExistence type="evidence at transcript level"/>